<name>NRDR_ERYLH</name>
<proteinExistence type="inferred from homology"/>
<evidence type="ECO:0000255" key="1">
    <source>
        <dbReference type="HAMAP-Rule" id="MF_00440"/>
    </source>
</evidence>
<feature type="chain" id="PRO_1000080751" description="Transcriptional repressor NrdR">
    <location>
        <begin position="1"/>
        <end position="153"/>
    </location>
</feature>
<feature type="domain" description="ATP-cone" evidence="1">
    <location>
        <begin position="49"/>
        <end position="139"/>
    </location>
</feature>
<feature type="zinc finger region" evidence="1">
    <location>
        <begin position="3"/>
        <end position="34"/>
    </location>
</feature>
<reference key="1">
    <citation type="journal article" date="2009" name="J. Bacteriol.">
        <title>Complete genome sequence of Erythrobacter litoralis HTCC2594.</title>
        <authorList>
            <person name="Oh H.M."/>
            <person name="Giovannoni S.J."/>
            <person name="Ferriera S."/>
            <person name="Johnson J."/>
            <person name="Cho J.C."/>
        </authorList>
    </citation>
    <scope>NUCLEOTIDE SEQUENCE [LARGE SCALE GENOMIC DNA]</scope>
    <source>
        <strain>HTCC2594</strain>
    </source>
</reference>
<dbReference type="EMBL" id="CP000157">
    <property type="protein sequence ID" value="ABC63220.1"/>
    <property type="molecule type" value="Genomic_DNA"/>
</dbReference>
<dbReference type="RefSeq" id="WP_011414056.1">
    <property type="nucleotide sequence ID" value="NC_007722.1"/>
</dbReference>
<dbReference type="SMR" id="Q2NAS1"/>
<dbReference type="STRING" id="314225.ELI_05640"/>
<dbReference type="KEGG" id="eli:ELI_05640"/>
<dbReference type="eggNOG" id="COG1327">
    <property type="taxonomic scope" value="Bacteria"/>
</dbReference>
<dbReference type="HOGENOM" id="CLU_108412_0_1_5"/>
<dbReference type="OrthoDB" id="9807461at2"/>
<dbReference type="Proteomes" id="UP000008808">
    <property type="component" value="Chromosome"/>
</dbReference>
<dbReference type="GO" id="GO:0005524">
    <property type="term" value="F:ATP binding"/>
    <property type="evidence" value="ECO:0007669"/>
    <property type="project" value="UniProtKB-KW"/>
</dbReference>
<dbReference type="GO" id="GO:0003677">
    <property type="term" value="F:DNA binding"/>
    <property type="evidence" value="ECO:0007669"/>
    <property type="project" value="UniProtKB-KW"/>
</dbReference>
<dbReference type="GO" id="GO:0008270">
    <property type="term" value="F:zinc ion binding"/>
    <property type="evidence" value="ECO:0007669"/>
    <property type="project" value="UniProtKB-UniRule"/>
</dbReference>
<dbReference type="GO" id="GO:0045892">
    <property type="term" value="P:negative regulation of DNA-templated transcription"/>
    <property type="evidence" value="ECO:0007669"/>
    <property type="project" value="UniProtKB-UniRule"/>
</dbReference>
<dbReference type="HAMAP" id="MF_00440">
    <property type="entry name" value="NrdR"/>
    <property type="match status" value="1"/>
</dbReference>
<dbReference type="InterPro" id="IPR005144">
    <property type="entry name" value="ATP-cone_dom"/>
</dbReference>
<dbReference type="InterPro" id="IPR055173">
    <property type="entry name" value="NrdR-like_N"/>
</dbReference>
<dbReference type="InterPro" id="IPR003796">
    <property type="entry name" value="RNR_NrdR-like"/>
</dbReference>
<dbReference type="NCBIfam" id="TIGR00244">
    <property type="entry name" value="transcriptional regulator NrdR"/>
    <property type="match status" value="1"/>
</dbReference>
<dbReference type="PANTHER" id="PTHR30455">
    <property type="entry name" value="TRANSCRIPTIONAL REPRESSOR NRDR"/>
    <property type="match status" value="1"/>
</dbReference>
<dbReference type="PANTHER" id="PTHR30455:SF2">
    <property type="entry name" value="TRANSCRIPTIONAL REPRESSOR NRDR"/>
    <property type="match status" value="1"/>
</dbReference>
<dbReference type="Pfam" id="PF03477">
    <property type="entry name" value="ATP-cone"/>
    <property type="match status" value="1"/>
</dbReference>
<dbReference type="Pfam" id="PF22811">
    <property type="entry name" value="Zn_ribbon_NrdR"/>
    <property type="match status" value="1"/>
</dbReference>
<dbReference type="PROSITE" id="PS51161">
    <property type="entry name" value="ATP_CONE"/>
    <property type="match status" value="1"/>
</dbReference>
<gene>
    <name evidence="1" type="primary">nrdR</name>
    <name type="ordered locus">ELI_05640</name>
</gene>
<organism>
    <name type="scientific">Erythrobacter litoralis (strain HTCC2594)</name>
    <dbReference type="NCBI Taxonomy" id="314225"/>
    <lineage>
        <taxon>Bacteria</taxon>
        <taxon>Pseudomonadati</taxon>
        <taxon>Pseudomonadota</taxon>
        <taxon>Alphaproteobacteria</taxon>
        <taxon>Sphingomonadales</taxon>
        <taxon>Erythrobacteraceae</taxon>
        <taxon>Erythrobacter/Porphyrobacter group</taxon>
        <taxon>Erythrobacter</taxon>
    </lineage>
</organism>
<accession>Q2NAS1</accession>
<sequence>MRCPFCAHDDSQVKDSRPAEDNAAIRRRRQCSKCGARFTTFERVQLRDVTVVKSDDKREAFDRSKLEQSVTLACRKRGVTQEQIDQLVSGIQRQVETAGEGEIASTRIGEMVMDGLRQIDSVAYIRFASVYRDFSEARDFEEFASTVQEAAKD</sequence>
<keyword id="KW-0067">ATP-binding</keyword>
<keyword id="KW-0238">DNA-binding</keyword>
<keyword id="KW-0479">Metal-binding</keyword>
<keyword id="KW-0547">Nucleotide-binding</keyword>
<keyword id="KW-1185">Reference proteome</keyword>
<keyword id="KW-0678">Repressor</keyword>
<keyword id="KW-0804">Transcription</keyword>
<keyword id="KW-0805">Transcription regulation</keyword>
<keyword id="KW-0862">Zinc</keyword>
<keyword id="KW-0863">Zinc-finger</keyword>
<protein>
    <recommendedName>
        <fullName evidence="1">Transcriptional repressor NrdR</fullName>
    </recommendedName>
</protein>
<comment type="function">
    <text evidence="1">Negatively regulates transcription of bacterial ribonucleotide reductase nrd genes and operons by binding to NrdR-boxes.</text>
</comment>
<comment type="cofactor">
    <cofactor evidence="1">
        <name>Zn(2+)</name>
        <dbReference type="ChEBI" id="CHEBI:29105"/>
    </cofactor>
    <text evidence="1">Binds 1 zinc ion.</text>
</comment>
<comment type="similarity">
    <text evidence="1">Belongs to the NrdR family.</text>
</comment>